<sequence>MKMLTRLQVLMLALFSKGFLVSLGDHNFMRREIKIEGDLVLGGLFPINEKGTGTEECGRINEDRGIQRLEAMLFAIDEINKDNYLLPGVKLGVHILDTCSRDTYALEQSLEFVRASLTKVDEAEYMCPDGSYAIQENIPLLIAGVIGGSYSSVSIQVANLLRLFQIPQISYASTSAKLSDKSRYDYFARTVPPDFYQAKAMAEILRYFNWTYVSTVASEGDYGETGIEAFEQEARLRNICIATAEKVGRSNIRKSYDSVIRELLQKPNARVVVLFMRSDDSRELIAAASRVNASFTWVASDGWGAQESIVKGSEHVAYGAITLELASHPVRQFDRYFQSLNPYNNHRNPWFRDFWEQKFQCSLQNKRNHRQICDKHLAIDSSNYEQESKIMFVVNAVYAMAHALHKMQRTLCPNTTKLCDAMKILDGKKLYKDYLLKINFTAPFNPNKGADSIVKFDTYGDGMGRYNVFNFQHIGGKYSYLKVGHWAETLYLDVDSIHWSRNSVPTSQCSDPCAPNEMKNMQPGDVCCWICIPCEPYEYLVDEFTCMDCGPGQWPTADLSGCYNLPEDYIRWEDAWAIGPVTIACLGFMCTCIVITVFIKHNNTPLVKASGRELCYILLFGVSLSYCMTFFFIAKPSPVICALRRLGLGTSFAICYSALLTKTNCIARIFDGVKNGAQRPKFISPSSQVFICLGLILVQIVMVSVWLILETPGTRRYTLPEKRETVILKCNVKDSSMLISLTYDVVLVILCTVYAFKTRKCPENFNEAKFIGFTMYTTCIIWLAFLPIFYVTSSDYRVQTTTMCISVSLSGFVVLGCLFAPKVHIVLFQPQKNVVTHRLHLNRFSVSGTATTYSQSSASTYVPTVCNGREVLDSTTSSL</sequence>
<gene>
    <name type="primary">Grm3</name>
    <name type="synonym">Gprc1c</name>
    <name type="synonym">Mglur3</name>
</gene>
<feature type="signal peptide" evidence="2">
    <location>
        <begin position="1"/>
        <end position="22"/>
    </location>
</feature>
<feature type="chain" id="PRO_0000012928" description="Metabotropic glutamate receptor 3">
    <location>
        <begin position="23"/>
        <end position="879"/>
    </location>
</feature>
<feature type="topological domain" description="Extracellular" evidence="2">
    <location>
        <begin position="23"/>
        <end position="576"/>
    </location>
</feature>
<feature type="transmembrane region" description="Helical; Name=1" evidence="2">
    <location>
        <begin position="577"/>
        <end position="599"/>
    </location>
</feature>
<feature type="topological domain" description="Cytoplasmic" evidence="2">
    <location>
        <begin position="600"/>
        <end position="613"/>
    </location>
</feature>
<feature type="transmembrane region" description="Helical; Name=2" evidence="2">
    <location>
        <begin position="614"/>
        <end position="634"/>
    </location>
</feature>
<feature type="topological domain" description="Extracellular" evidence="2">
    <location>
        <begin position="635"/>
        <end position="645"/>
    </location>
</feature>
<feature type="transmembrane region" description="Helical; Name=3" evidence="2">
    <location>
        <begin position="646"/>
        <end position="664"/>
    </location>
</feature>
<feature type="topological domain" description="Cytoplasmic" evidence="2">
    <location>
        <begin position="665"/>
        <end position="688"/>
    </location>
</feature>
<feature type="transmembrane region" description="Helical; Name=4" evidence="2">
    <location>
        <begin position="689"/>
        <end position="709"/>
    </location>
</feature>
<feature type="topological domain" description="Extracellular" evidence="2">
    <location>
        <begin position="710"/>
        <end position="734"/>
    </location>
</feature>
<feature type="transmembrane region" description="Helical; Name=5" evidence="2">
    <location>
        <begin position="735"/>
        <end position="756"/>
    </location>
</feature>
<feature type="topological domain" description="Cytoplasmic" evidence="2">
    <location>
        <begin position="757"/>
        <end position="769"/>
    </location>
</feature>
<feature type="transmembrane region" description="Helical; Name=6" evidence="2">
    <location>
        <begin position="770"/>
        <end position="792"/>
    </location>
</feature>
<feature type="topological domain" description="Extracellular" evidence="2">
    <location>
        <begin position="793"/>
        <end position="802"/>
    </location>
</feature>
<feature type="transmembrane region" description="Helical; Name=7" evidence="2">
    <location>
        <begin position="803"/>
        <end position="828"/>
    </location>
</feature>
<feature type="topological domain" description="Cytoplasmic" evidence="2">
    <location>
        <begin position="829"/>
        <end position="879"/>
    </location>
</feature>
<feature type="binding site" evidence="1">
    <location>
        <position position="151"/>
    </location>
    <ligand>
        <name>L-glutamate</name>
        <dbReference type="ChEBI" id="CHEBI:29985"/>
    </ligand>
</feature>
<feature type="binding site" evidence="1">
    <location>
        <begin position="172"/>
        <end position="174"/>
    </location>
    <ligand>
        <name>L-glutamate</name>
        <dbReference type="ChEBI" id="CHEBI:29985"/>
    </ligand>
</feature>
<feature type="binding site" evidence="1">
    <location>
        <position position="222"/>
    </location>
    <ligand>
        <name>L-glutamate</name>
        <dbReference type="ChEBI" id="CHEBI:29985"/>
    </ligand>
</feature>
<feature type="binding site" evidence="1">
    <location>
        <position position="301"/>
    </location>
    <ligand>
        <name>L-glutamate</name>
        <dbReference type="ChEBI" id="CHEBI:29985"/>
    </ligand>
</feature>
<feature type="binding site" evidence="1">
    <location>
        <position position="389"/>
    </location>
    <ligand>
        <name>L-glutamate</name>
        <dbReference type="ChEBI" id="CHEBI:29985"/>
    </ligand>
</feature>
<feature type="glycosylation site" description="N-linked (GlcNAc...) asparagine" evidence="2">
    <location>
        <position position="209"/>
    </location>
</feature>
<feature type="glycosylation site" description="N-linked (GlcNAc...) asparagine" evidence="2">
    <location>
        <position position="292"/>
    </location>
</feature>
<feature type="glycosylation site" description="N-linked (GlcNAc...) asparagine" evidence="2">
    <location>
        <position position="414"/>
    </location>
</feature>
<feature type="glycosylation site" description="N-linked (GlcNAc...) asparagine" evidence="2">
    <location>
        <position position="439"/>
    </location>
</feature>
<feature type="disulfide bond" evidence="1">
    <location>
        <begin position="57"/>
        <end position="99"/>
    </location>
</feature>
<feature type="disulfide bond" evidence="1">
    <location>
        <begin position="240"/>
        <end position="527"/>
    </location>
</feature>
<feature type="disulfide bond" evidence="1">
    <location>
        <begin position="361"/>
        <end position="373"/>
    </location>
</feature>
<feature type="disulfide bond" evidence="1">
    <location>
        <begin position="412"/>
        <end position="419"/>
    </location>
</feature>
<feature type="disulfide bond" evidence="1">
    <location>
        <begin position="509"/>
        <end position="528"/>
    </location>
</feature>
<feature type="disulfide bond" evidence="1">
    <location>
        <begin position="513"/>
        <end position="531"/>
    </location>
</feature>
<feature type="disulfide bond" evidence="1">
    <location>
        <begin position="534"/>
        <end position="546"/>
    </location>
</feature>
<feature type="disulfide bond" evidence="1">
    <location>
        <begin position="549"/>
        <end position="562"/>
    </location>
</feature>
<name>GRM3_MOUSE</name>
<proteinExistence type="evidence at protein level"/>
<organism>
    <name type="scientific">Mus musculus</name>
    <name type="common">Mouse</name>
    <dbReference type="NCBI Taxonomy" id="10090"/>
    <lineage>
        <taxon>Eukaryota</taxon>
        <taxon>Metazoa</taxon>
        <taxon>Chordata</taxon>
        <taxon>Craniata</taxon>
        <taxon>Vertebrata</taxon>
        <taxon>Euteleostomi</taxon>
        <taxon>Mammalia</taxon>
        <taxon>Eutheria</taxon>
        <taxon>Euarchontoglires</taxon>
        <taxon>Glires</taxon>
        <taxon>Rodentia</taxon>
        <taxon>Myomorpha</taxon>
        <taxon>Muroidea</taxon>
        <taxon>Muridae</taxon>
        <taxon>Murinae</taxon>
        <taxon>Mus</taxon>
        <taxon>Mus</taxon>
    </lineage>
</organism>
<dbReference type="EMBL" id="AF170701">
    <property type="protein sequence ID" value="AAF06741.1"/>
    <property type="molecule type" value="Genomic_DNA"/>
</dbReference>
<dbReference type="EMBL" id="AF170697">
    <property type="protein sequence ID" value="AAF06741.1"/>
    <property type="status" value="JOINED"/>
    <property type="molecule type" value="Genomic_DNA"/>
</dbReference>
<dbReference type="EMBL" id="AF170698">
    <property type="protein sequence ID" value="AAF06741.1"/>
    <property type="status" value="JOINED"/>
    <property type="molecule type" value="Genomic_DNA"/>
</dbReference>
<dbReference type="EMBL" id="AF170699">
    <property type="protein sequence ID" value="AAF06741.1"/>
    <property type="status" value="JOINED"/>
    <property type="molecule type" value="Genomic_DNA"/>
</dbReference>
<dbReference type="EMBL" id="AF170700">
    <property type="protein sequence ID" value="AAF06741.1"/>
    <property type="status" value="JOINED"/>
    <property type="molecule type" value="Genomic_DNA"/>
</dbReference>
<dbReference type="EMBL" id="BC111891">
    <property type="protein sequence ID" value="AAI11892.1"/>
    <property type="molecule type" value="mRNA"/>
</dbReference>
<dbReference type="EMBL" id="BC113170">
    <property type="protein sequence ID" value="AAI13171.1"/>
    <property type="molecule type" value="mRNA"/>
</dbReference>
<dbReference type="CCDS" id="CCDS19090.1"/>
<dbReference type="PIR" id="JC7160">
    <property type="entry name" value="JC7160"/>
</dbReference>
<dbReference type="RefSeq" id="NP_001404893.1">
    <property type="nucleotide sequence ID" value="NM_001417964.1"/>
</dbReference>
<dbReference type="RefSeq" id="NP_862898.1">
    <property type="nucleotide sequence ID" value="NM_181850.3"/>
</dbReference>
<dbReference type="RefSeq" id="XP_036020611.1">
    <property type="nucleotide sequence ID" value="XM_036164718.1"/>
</dbReference>
<dbReference type="RefSeq" id="XP_036020612.1">
    <property type="nucleotide sequence ID" value="XM_036164719.1"/>
</dbReference>
<dbReference type="RefSeq" id="XP_036020613.1">
    <property type="nucleotide sequence ID" value="XM_036164720.1"/>
</dbReference>
<dbReference type="SMR" id="Q9QYS2"/>
<dbReference type="BioGRID" id="223808">
    <property type="interactions" value="8"/>
</dbReference>
<dbReference type="FunCoup" id="Q9QYS2">
    <property type="interactions" value="917"/>
</dbReference>
<dbReference type="IntAct" id="Q9QYS2">
    <property type="interactions" value="4"/>
</dbReference>
<dbReference type="STRING" id="10090.ENSMUSP00000004076"/>
<dbReference type="ChEMBL" id="CHEMBL3824"/>
<dbReference type="GlyConnect" id="2508">
    <property type="glycosylation" value="12 N-Linked glycans (1 site)"/>
</dbReference>
<dbReference type="GlyCosmos" id="Q9QYS2">
    <property type="glycosylation" value="4 sites, 12 glycans"/>
</dbReference>
<dbReference type="GlyGen" id="Q9QYS2">
    <property type="glycosylation" value="5 sites, 14 N-linked glycans (2 sites), 1 O-linked glycan (1 site)"/>
</dbReference>
<dbReference type="iPTMnet" id="Q9QYS2"/>
<dbReference type="MetOSite" id="Q9QYS2"/>
<dbReference type="PhosphoSitePlus" id="Q9QYS2"/>
<dbReference type="SwissPalm" id="Q9QYS2"/>
<dbReference type="PaxDb" id="10090-ENSMUSP00000004076"/>
<dbReference type="PeptideAtlas" id="Q9QYS2"/>
<dbReference type="ProteomicsDB" id="271170"/>
<dbReference type="Antibodypedia" id="15243">
    <property type="antibodies" value="378 antibodies from 35 providers"/>
</dbReference>
<dbReference type="DNASU" id="108069"/>
<dbReference type="Ensembl" id="ENSMUST00000004076.5">
    <property type="protein sequence ID" value="ENSMUSP00000004076.4"/>
    <property type="gene ID" value="ENSMUSG00000003974.7"/>
</dbReference>
<dbReference type="GeneID" id="108069"/>
<dbReference type="KEGG" id="mmu:108069"/>
<dbReference type="UCSC" id="uc008wll.1">
    <property type="organism name" value="mouse"/>
</dbReference>
<dbReference type="AGR" id="MGI:1351340"/>
<dbReference type="CTD" id="2913"/>
<dbReference type="MGI" id="MGI:1351340">
    <property type="gene designation" value="Grm3"/>
</dbReference>
<dbReference type="VEuPathDB" id="HostDB:ENSMUSG00000003974"/>
<dbReference type="eggNOG" id="KOG1056">
    <property type="taxonomic scope" value="Eukaryota"/>
</dbReference>
<dbReference type="GeneTree" id="ENSGT01030000234595"/>
<dbReference type="HOGENOM" id="CLU_005389_0_0_1"/>
<dbReference type="InParanoid" id="Q9QYS2"/>
<dbReference type="OMA" id="CNIQDMS"/>
<dbReference type="OrthoDB" id="425344at2759"/>
<dbReference type="PhylomeDB" id="Q9QYS2"/>
<dbReference type="TreeFam" id="TF313240"/>
<dbReference type="Reactome" id="R-MMU-418594">
    <property type="pathway name" value="G alpha (i) signalling events"/>
</dbReference>
<dbReference type="Reactome" id="R-MMU-420499">
    <property type="pathway name" value="Class C/3 (Metabotropic glutamate/pheromone receptors)"/>
</dbReference>
<dbReference type="BioGRID-ORCS" id="108069">
    <property type="hits" value="2 hits in 78 CRISPR screens"/>
</dbReference>
<dbReference type="CD-CODE" id="CE726F99">
    <property type="entry name" value="Postsynaptic density"/>
</dbReference>
<dbReference type="ChiTaRS" id="Grm3">
    <property type="organism name" value="mouse"/>
</dbReference>
<dbReference type="PRO" id="PR:Q9QYS2"/>
<dbReference type="Proteomes" id="UP000000589">
    <property type="component" value="Chromosome 5"/>
</dbReference>
<dbReference type="RNAct" id="Q9QYS2">
    <property type="molecule type" value="protein"/>
</dbReference>
<dbReference type="Bgee" id="ENSMUSG00000003974">
    <property type="expression patterns" value="Expressed in dorsal striatum and 93 other cell types or tissues"/>
</dbReference>
<dbReference type="GO" id="GO:0097449">
    <property type="term" value="C:astrocyte projection"/>
    <property type="evidence" value="ECO:0007669"/>
    <property type="project" value="Ensembl"/>
</dbReference>
<dbReference type="GO" id="GO:0030424">
    <property type="term" value="C:axon"/>
    <property type="evidence" value="ECO:0000314"/>
    <property type="project" value="UniProtKB"/>
</dbReference>
<dbReference type="GO" id="GO:0043197">
    <property type="term" value="C:dendritic spine"/>
    <property type="evidence" value="ECO:0000314"/>
    <property type="project" value="UniProtKB"/>
</dbReference>
<dbReference type="GO" id="GO:0098978">
    <property type="term" value="C:glutamatergic synapse"/>
    <property type="evidence" value="ECO:0000314"/>
    <property type="project" value="SynGO"/>
</dbReference>
<dbReference type="GO" id="GO:0043005">
    <property type="term" value="C:neuron projection"/>
    <property type="evidence" value="ECO:0000314"/>
    <property type="project" value="MGI"/>
</dbReference>
<dbReference type="GO" id="GO:0005886">
    <property type="term" value="C:plasma membrane"/>
    <property type="evidence" value="ECO:0000314"/>
    <property type="project" value="UniProtKB"/>
</dbReference>
<dbReference type="GO" id="GO:0014069">
    <property type="term" value="C:postsynaptic density"/>
    <property type="evidence" value="ECO:0000314"/>
    <property type="project" value="MGI"/>
</dbReference>
<dbReference type="GO" id="GO:0045211">
    <property type="term" value="C:postsynaptic membrane"/>
    <property type="evidence" value="ECO:0000314"/>
    <property type="project" value="UniProtKB"/>
</dbReference>
<dbReference type="GO" id="GO:0048786">
    <property type="term" value="C:presynaptic active zone"/>
    <property type="evidence" value="ECO:0000303"/>
    <property type="project" value="UniProtKB"/>
</dbReference>
<dbReference type="GO" id="GO:0042734">
    <property type="term" value="C:presynaptic membrane"/>
    <property type="evidence" value="ECO:0000314"/>
    <property type="project" value="UniProtKB"/>
</dbReference>
<dbReference type="GO" id="GO:0005246">
    <property type="term" value="F:calcium channel regulator activity"/>
    <property type="evidence" value="ECO:0000314"/>
    <property type="project" value="MGI"/>
</dbReference>
<dbReference type="GO" id="GO:0001641">
    <property type="term" value="F:group II metabotropic glutamate receptor activity"/>
    <property type="evidence" value="ECO:0000314"/>
    <property type="project" value="MGI"/>
</dbReference>
<dbReference type="GO" id="GO:0097110">
    <property type="term" value="F:scaffold protein binding"/>
    <property type="evidence" value="ECO:0007669"/>
    <property type="project" value="Ensembl"/>
</dbReference>
<dbReference type="GO" id="GO:0033554">
    <property type="term" value="P:cellular response to stress"/>
    <property type="evidence" value="ECO:0000314"/>
    <property type="project" value="MGI"/>
</dbReference>
<dbReference type="GO" id="GO:0010467">
    <property type="term" value="P:gene expression"/>
    <property type="evidence" value="ECO:0000315"/>
    <property type="project" value="MGI"/>
</dbReference>
<dbReference type="GO" id="GO:0099170">
    <property type="term" value="P:postsynaptic modulation of chemical synaptic transmission"/>
    <property type="evidence" value="ECO:0000314"/>
    <property type="project" value="SynGO"/>
</dbReference>
<dbReference type="GO" id="GO:0051930">
    <property type="term" value="P:regulation of sensory perception of pain"/>
    <property type="evidence" value="ECO:0000303"/>
    <property type="project" value="UniProtKB"/>
</dbReference>
<dbReference type="GO" id="GO:0019233">
    <property type="term" value="P:sensory perception of pain"/>
    <property type="evidence" value="ECO:0000304"/>
    <property type="project" value="UniProtKB"/>
</dbReference>
<dbReference type="GO" id="GO:0035249">
    <property type="term" value="P:synaptic transmission, glutamatergic"/>
    <property type="evidence" value="ECO:0000304"/>
    <property type="project" value="UniProtKB"/>
</dbReference>
<dbReference type="CDD" id="cd15448">
    <property type="entry name" value="7tmC_mGluR3"/>
    <property type="match status" value="1"/>
</dbReference>
<dbReference type="CDD" id="cd06375">
    <property type="entry name" value="PBP1_mGluR_groupII"/>
    <property type="match status" value="1"/>
</dbReference>
<dbReference type="FunFam" id="2.10.50.30:FF:000001">
    <property type="entry name" value="metabotropic glutamate receptor 1"/>
    <property type="match status" value="1"/>
</dbReference>
<dbReference type="FunFam" id="3.40.50.2300:FF:000029">
    <property type="entry name" value="Metabotropic glutamate receptor 3"/>
    <property type="match status" value="1"/>
</dbReference>
<dbReference type="Gene3D" id="3.40.50.2300">
    <property type="match status" value="2"/>
</dbReference>
<dbReference type="Gene3D" id="2.10.50.30">
    <property type="entry name" value="GPCR, family 3, nine cysteines domain"/>
    <property type="match status" value="1"/>
</dbReference>
<dbReference type="InterPro" id="IPR001828">
    <property type="entry name" value="ANF_lig-bd_rcpt"/>
</dbReference>
<dbReference type="InterPro" id="IPR000337">
    <property type="entry name" value="GPCR_3"/>
</dbReference>
<dbReference type="InterPro" id="IPR011500">
    <property type="entry name" value="GPCR_3_9-Cys_dom"/>
</dbReference>
<dbReference type="InterPro" id="IPR038550">
    <property type="entry name" value="GPCR_3_9-Cys_sf"/>
</dbReference>
<dbReference type="InterPro" id="IPR017978">
    <property type="entry name" value="GPCR_3_C"/>
</dbReference>
<dbReference type="InterPro" id="IPR017979">
    <property type="entry name" value="GPCR_3_CS"/>
</dbReference>
<dbReference type="InterPro" id="IPR001234">
    <property type="entry name" value="GPCR_3_mGluR3"/>
</dbReference>
<dbReference type="InterPro" id="IPR000162">
    <property type="entry name" value="GPCR_3_mtglu_rcpt"/>
</dbReference>
<dbReference type="InterPro" id="IPR050726">
    <property type="entry name" value="mGluR"/>
</dbReference>
<dbReference type="InterPro" id="IPR028082">
    <property type="entry name" value="Peripla_BP_I"/>
</dbReference>
<dbReference type="PANTHER" id="PTHR24060">
    <property type="entry name" value="METABOTROPIC GLUTAMATE RECEPTOR"/>
    <property type="match status" value="1"/>
</dbReference>
<dbReference type="Pfam" id="PF00003">
    <property type="entry name" value="7tm_3"/>
    <property type="match status" value="1"/>
</dbReference>
<dbReference type="Pfam" id="PF01094">
    <property type="entry name" value="ANF_receptor"/>
    <property type="match status" value="1"/>
</dbReference>
<dbReference type="Pfam" id="PF07562">
    <property type="entry name" value="NCD3G"/>
    <property type="match status" value="1"/>
</dbReference>
<dbReference type="PRINTS" id="PR00248">
    <property type="entry name" value="GPCRMGR"/>
</dbReference>
<dbReference type="PRINTS" id="PR01053">
    <property type="entry name" value="MTABOTROPC3R"/>
</dbReference>
<dbReference type="PRINTS" id="PR00593">
    <property type="entry name" value="MTABOTROPICR"/>
</dbReference>
<dbReference type="SUPFAM" id="SSF53822">
    <property type="entry name" value="Periplasmic binding protein-like I"/>
    <property type="match status" value="1"/>
</dbReference>
<dbReference type="PROSITE" id="PS00979">
    <property type="entry name" value="G_PROTEIN_RECEP_F3_1"/>
    <property type="match status" value="1"/>
</dbReference>
<dbReference type="PROSITE" id="PS00980">
    <property type="entry name" value="G_PROTEIN_RECEP_F3_2"/>
    <property type="match status" value="1"/>
</dbReference>
<dbReference type="PROSITE" id="PS00981">
    <property type="entry name" value="G_PROTEIN_RECEP_F3_3"/>
    <property type="match status" value="1"/>
</dbReference>
<dbReference type="PROSITE" id="PS50259">
    <property type="entry name" value="G_PROTEIN_RECEP_F3_4"/>
    <property type="match status" value="1"/>
</dbReference>
<protein>
    <recommendedName>
        <fullName>Metabotropic glutamate receptor 3</fullName>
        <shortName>mGluR3</shortName>
    </recommendedName>
</protein>
<comment type="function">
    <text>G-protein coupled receptor for glutamate. Ligand binding causes a conformation change that triggers signaling via guanine nucleotide-binding proteins (G proteins) and modulates the activity of down-stream effectors. Signaling inhibits adenylate cyclase activity.</text>
</comment>
<comment type="subunit">
    <text evidence="1">Interacts with TAMALIN.</text>
</comment>
<comment type="subcellular location">
    <subcellularLocation>
        <location>Cell membrane</location>
        <topology>Multi-pass membrane protein</topology>
    </subcellularLocation>
</comment>
<comment type="similarity">
    <text evidence="3">Belongs to the G-protein coupled receptor 3 family.</text>
</comment>
<evidence type="ECO:0000250" key="1"/>
<evidence type="ECO:0000255" key="2"/>
<evidence type="ECO:0000305" key="3"/>
<reference key="1">
    <citation type="journal article" date="1999" name="J. Biochem.">
        <title>Structural organization of the mouse metabotropic glutamate receptor subtype 3 gene and its regulation by growth factors in cultured cortical astrocytes.</title>
        <authorList>
            <person name="Minoshima T."/>
            <person name="Nakanishi S."/>
        </authorList>
    </citation>
    <scope>NUCLEOTIDE SEQUENCE [GENOMIC DNA]</scope>
    <source>
        <strain>129/Sv</strain>
    </source>
</reference>
<reference key="2">
    <citation type="journal article" date="2004" name="Genome Res.">
        <title>The status, quality, and expansion of the NIH full-length cDNA project: the Mammalian Gene Collection (MGC).</title>
        <authorList>
            <consortium name="The MGC Project Team"/>
        </authorList>
    </citation>
    <scope>NUCLEOTIDE SEQUENCE [LARGE SCALE MRNA]</scope>
</reference>
<reference key="3">
    <citation type="journal article" date="2010" name="Cell">
        <title>A tissue-specific atlas of mouse protein phosphorylation and expression.</title>
        <authorList>
            <person name="Huttlin E.L."/>
            <person name="Jedrychowski M.P."/>
            <person name="Elias J.E."/>
            <person name="Goswami T."/>
            <person name="Rad R."/>
            <person name="Beausoleil S.A."/>
            <person name="Villen J."/>
            <person name="Haas W."/>
            <person name="Sowa M.E."/>
            <person name="Gygi S.P."/>
        </authorList>
    </citation>
    <scope>IDENTIFICATION BY MASS SPECTROMETRY [LARGE SCALE ANALYSIS]</scope>
    <source>
        <tissue>Brain</tissue>
    </source>
</reference>
<keyword id="KW-1003">Cell membrane</keyword>
<keyword id="KW-1015">Disulfide bond</keyword>
<keyword id="KW-0297">G-protein coupled receptor</keyword>
<keyword id="KW-0325">Glycoprotein</keyword>
<keyword id="KW-0472">Membrane</keyword>
<keyword id="KW-0675">Receptor</keyword>
<keyword id="KW-1185">Reference proteome</keyword>
<keyword id="KW-0732">Signal</keyword>
<keyword id="KW-0807">Transducer</keyword>
<keyword id="KW-0812">Transmembrane</keyword>
<keyword id="KW-1133">Transmembrane helix</keyword>
<accession>Q9QYS2</accession>
<accession>Q14DJ9</accession>